<sequence>MARGEKGRGEGPAKSALRKVRTATLVINLARGWQQWANENSTRQAQEPTGWMPGGARESDQPSGPVIHPTTHQKVQSAPKSPSPKPGGYGAGQSSEGATEVSPIKRKEVTKTIVSKAYERGGDVSHLSHRYEKDGDEPEPEQPESDIDRLLRSHGSPTRRRKCANLVSELTKGWKEMEQEEQEELKCRSDSIDTEDSGYGGETEERPEQDGEQVAIARIKRPLPSQANRFTEKLNCKAQRKYSQVGHLKGRWQQWADEHIQSQKLNPFSDEFDYELAMSTRLHKGDEGYGRPKEGTRTAERAKRAEEHIYREIMDMCFIIRTMAHPRRDGKIQVTFGDLFDRYVRISDKVVGILMRARKHGLVDFEGEMLWQGRDDHVVITLLK</sequence>
<dbReference type="EMBL" id="DQ536197">
    <property type="protein sequence ID" value="ABG00262.1"/>
    <property type="molecule type" value="mRNA"/>
</dbReference>
<dbReference type="RefSeq" id="NP_001129432.1">
    <property type="nucleotide sequence ID" value="NM_001135960.2"/>
</dbReference>
<dbReference type="SMR" id="B5SNZ6"/>
<dbReference type="FunCoup" id="B5SNZ6">
    <property type="interactions" value="151"/>
</dbReference>
<dbReference type="IntAct" id="B5SNZ6">
    <property type="interactions" value="1"/>
</dbReference>
<dbReference type="STRING" id="9823.ENSSSCP00000034829"/>
<dbReference type="PaxDb" id="9823-ENSSSCP00000006449"/>
<dbReference type="Ensembl" id="ENSSSCT00015048398.1">
    <property type="protein sequence ID" value="ENSSSCP00015019244.1"/>
    <property type="gene ID" value="ENSSSCG00015036376.1"/>
</dbReference>
<dbReference type="Ensembl" id="ENSSSCT00025089178.1">
    <property type="protein sequence ID" value="ENSSSCP00025039006.1"/>
    <property type="gene ID" value="ENSSSCG00025064982.1"/>
</dbReference>
<dbReference type="Ensembl" id="ENSSSCT00030018633.1">
    <property type="protein sequence ID" value="ENSSSCP00030008252.1"/>
    <property type="gene ID" value="ENSSSCG00030013589.1"/>
</dbReference>
<dbReference type="Ensembl" id="ENSSSCT00035084200.1">
    <property type="protein sequence ID" value="ENSSSCP00035035006.1"/>
    <property type="gene ID" value="ENSSSCG00035062655.1"/>
</dbReference>
<dbReference type="Ensembl" id="ENSSSCT00045040820.1">
    <property type="protein sequence ID" value="ENSSSCP00045028372.1"/>
    <property type="gene ID" value="ENSSSCG00045023911.1"/>
</dbReference>
<dbReference type="Ensembl" id="ENSSSCT00060044091.1">
    <property type="protein sequence ID" value="ENSSSCP00060018809.1"/>
    <property type="gene ID" value="ENSSSCG00060032554.1"/>
</dbReference>
<dbReference type="Ensembl" id="ENSSSCT00070017535.1">
    <property type="protein sequence ID" value="ENSSSCP00070014531.1"/>
    <property type="gene ID" value="ENSSSCG00070009047.1"/>
</dbReference>
<dbReference type="Ensembl" id="ENSSSCT00085030795">
    <property type="protein sequence ID" value="ENSSSCP00085021313"/>
    <property type="gene ID" value="ENSSSCG00085016187"/>
</dbReference>
<dbReference type="Ensembl" id="ENSSSCT00090021005">
    <property type="protein sequence ID" value="ENSSSCP00090012925"/>
    <property type="gene ID" value="ENSSSCG00090011947"/>
</dbReference>
<dbReference type="Ensembl" id="ENSSSCT00130009833">
    <property type="protein sequence ID" value="ENSSSCP00130007551"/>
    <property type="gene ID" value="ENSSSCG00130006238"/>
</dbReference>
<dbReference type="GeneID" id="100154546"/>
<dbReference type="KEGG" id="ssc:100154546"/>
<dbReference type="CTD" id="137735"/>
<dbReference type="eggNOG" id="KOG3376">
    <property type="taxonomic scope" value="Eukaryota"/>
</dbReference>
<dbReference type="InParanoid" id="B5SNZ6"/>
<dbReference type="OrthoDB" id="9871914at2759"/>
<dbReference type="Proteomes" id="UP000008227">
    <property type="component" value="Unplaced"/>
</dbReference>
<dbReference type="Proteomes" id="UP000314985">
    <property type="component" value="Chromosome 4"/>
</dbReference>
<dbReference type="Proteomes" id="UP000694570">
    <property type="component" value="Unplaced"/>
</dbReference>
<dbReference type="Proteomes" id="UP000694571">
    <property type="component" value="Unplaced"/>
</dbReference>
<dbReference type="Proteomes" id="UP000694720">
    <property type="component" value="Unplaced"/>
</dbReference>
<dbReference type="Proteomes" id="UP000694722">
    <property type="component" value="Unplaced"/>
</dbReference>
<dbReference type="Proteomes" id="UP000694723">
    <property type="component" value="Unplaced"/>
</dbReference>
<dbReference type="Proteomes" id="UP000694724">
    <property type="component" value="Unplaced"/>
</dbReference>
<dbReference type="Proteomes" id="UP000694725">
    <property type="component" value="Unplaced"/>
</dbReference>
<dbReference type="Proteomes" id="UP000694726">
    <property type="component" value="Unplaced"/>
</dbReference>
<dbReference type="Proteomes" id="UP000694727">
    <property type="component" value="Unplaced"/>
</dbReference>
<dbReference type="Proteomes" id="UP000694728">
    <property type="component" value="Unplaced"/>
</dbReference>
<dbReference type="GO" id="GO:0005856">
    <property type="term" value="C:cytoskeleton"/>
    <property type="evidence" value="ECO:0007669"/>
    <property type="project" value="UniProtKB-SubCell"/>
</dbReference>
<dbReference type="GO" id="GO:0030017">
    <property type="term" value="C:sarcomere"/>
    <property type="evidence" value="ECO:0000318"/>
    <property type="project" value="GO_Central"/>
</dbReference>
<dbReference type="GO" id="GO:0003779">
    <property type="term" value="F:actin binding"/>
    <property type="evidence" value="ECO:0007669"/>
    <property type="project" value="UniProtKB-KW"/>
</dbReference>
<dbReference type="GO" id="GO:0035025">
    <property type="term" value="P:positive regulation of Rho protein signal transduction"/>
    <property type="evidence" value="ECO:0000318"/>
    <property type="project" value="GO_Central"/>
</dbReference>
<dbReference type="GO" id="GO:0045944">
    <property type="term" value="P:positive regulation of transcription by RNA polymerase II"/>
    <property type="evidence" value="ECO:0000318"/>
    <property type="project" value="GO_Central"/>
</dbReference>
<dbReference type="GO" id="GO:0015031">
    <property type="term" value="P:protein transport"/>
    <property type="evidence" value="ECO:0007669"/>
    <property type="project" value="UniProtKB-KW"/>
</dbReference>
<dbReference type="FunFam" id="1.10.10.1540:FF:000001">
    <property type="entry name" value="Actin-binding Rho-activating protein a"/>
    <property type="match status" value="1"/>
</dbReference>
<dbReference type="Gene3D" id="1.10.10.1540">
    <property type="entry name" value="Costar domain"/>
    <property type="match status" value="1"/>
</dbReference>
<dbReference type="InterPro" id="IPR026111">
    <property type="entry name" value="Abra"/>
</dbReference>
<dbReference type="InterPro" id="IPR027817">
    <property type="entry name" value="Costars_dom"/>
</dbReference>
<dbReference type="InterPro" id="IPR038095">
    <property type="entry name" value="Costars_sf"/>
</dbReference>
<dbReference type="PANTHER" id="PTHR22739:SF20">
    <property type="entry name" value="ACTIN-BINDING RHO-ACTIVATING PROTEIN"/>
    <property type="match status" value="1"/>
</dbReference>
<dbReference type="PANTHER" id="PTHR22739">
    <property type="entry name" value="STRIATED MUSCLE ACTIVATOR OF RHO-DEPENDENT SIGNALING-RELATED"/>
    <property type="match status" value="1"/>
</dbReference>
<dbReference type="Pfam" id="PF14705">
    <property type="entry name" value="Costars"/>
    <property type="match status" value="1"/>
</dbReference>
<dbReference type="SMART" id="SM01283">
    <property type="entry name" value="Costars"/>
    <property type="match status" value="1"/>
</dbReference>
<protein>
    <recommendedName>
        <fullName>Actin-binding Rho-activating protein</fullName>
    </recommendedName>
    <alternativeName>
        <fullName>Striated muscle activator of Rho-dependent signaling</fullName>
        <shortName>STARS</shortName>
    </alternativeName>
</protein>
<keyword id="KW-0009">Actin-binding</keyword>
<keyword id="KW-0010">Activator</keyword>
<keyword id="KW-0963">Cytoplasm</keyword>
<keyword id="KW-0206">Cytoskeleton</keyword>
<keyword id="KW-0597">Phosphoprotein</keyword>
<keyword id="KW-0653">Protein transport</keyword>
<keyword id="KW-1185">Reference proteome</keyword>
<keyword id="KW-0804">Transcription</keyword>
<keyword id="KW-0805">Transcription regulation</keyword>
<keyword id="KW-0811">Translocation</keyword>
<keyword id="KW-0813">Transport</keyword>
<proteinExistence type="evidence at transcript level"/>
<evidence type="ECO:0000250" key="1"/>
<evidence type="ECO:0000250" key="2">
    <source>
        <dbReference type="UniProtKB" id="Q8K4K7"/>
    </source>
</evidence>
<evidence type="ECO:0000256" key="3">
    <source>
        <dbReference type="SAM" id="MobiDB-lite"/>
    </source>
</evidence>
<evidence type="ECO:0000269" key="4">
    <source>
    </source>
</evidence>
<comment type="function">
    <text evidence="1">Acts as an activator of serum response factor (SRF)-dependent transcription possibly by inducing nuclear translocation of MKL1 or MKL2 and through a mechanism requiring Rho-actin signaling.</text>
</comment>
<comment type="subunit">
    <text evidence="1">Binds F-actin and ABLIM1, ABLIM2 and ABLIM3. Interaction with ABLIM2 and ABLIM3 enhances activity (By similarity).</text>
</comment>
<comment type="subcellular location">
    <subcellularLocation>
        <location evidence="1">Cytoplasm</location>
        <location evidence="1">Myofibril</location>
        <location evidence="1">Sarcomere</location>
    </subcellularLocation>
    <subcellularLocation>
        <location evidence="1">Cytoplasm</location>
        <location evidence="1">Cytoskeleton</location>
    </subcellularLocation>
    <text evidence="1">Localized to the I-band of the sarcomere and to a lesser extent to the sarcomeric structure between Z-lines.</text>
</comment>
<comment type="tissue specificity">
    <text evidence="4">Specifically expressed in heart and skeletal muscles.</text>
</comment>
<comment type="developmental stage">
    <text>Expression increase gradually from 33 dpc (days post-coitum) to postnatal muscles, and peaks at 28 days postnatal.</text>
</comment>
<comment type="domain">
    <text evidence="1">The actin-binding domain 1 (ABD1) is intrinsically disordered, and binds to F-actin with higher affinity than ABD2.</text>
</comment>
<accession>B5SNZ6</accession>
<name>ABRA_PIG</name>
<reference key="1">
    <citation type="journal article" date="2008" name="Biochem. Genet.">
        <title>Molecular characterization and expression pattern of the porcine STARS, a striated muscle-specific expressed gene.</title>
        <authorList>
            <person name="Peng Y.B."/>
            <person name="Guan H.P."/>
            <person name="Fan B."/>
            <person name="Zhao S.H."/>
            <person name="Xu X.W."/>
            <person name="Li K."/>
            <person name="Zhu M.J."/>
            <person name="Yerle M."/>
            <person name="Liu B."/>
        </authorList>
    </citation>
    <scope>NUCLEOTIDE SEQUENCE [MRNA]</scope>
    <scope>TISSUE SPECIFICITY</scope>
</reference>
<gene>
    <name type="primary">ABRA</name>
</gene>
<feature type="chain" id="PRO_0000367810" description="Actin-binding Rho-activating protein">
    <location>
        <begin position="1"/>
        <end position="384"/>
    </location>
</feature>
<feature type="region of interest" description="Disordered" evidence="3">
    <location>
        <begin position="1"/>
        <end position="20"/>
    </location>
</feature>
<feature type="region of interest" description="Disordered" evidence="3">
    <location>
        <begin position="32"/>
        <end position="159"/>
    </location>
</feature>
<feature type="region of interest" description="Disordered" evidence="3">
    <location>
        <begin position="181"/>
        <end position="211"/>
    </location>
</feature>
<feature type="region of interest" description="Actin-binding 1" evidence="1">
    <location>
        <begin position="202"/>
        <end position="302"/>
    </location>
</feature>
<feature type="region of interest" description="Interaction with actin" evidence="1">
    <location>
        <begin position="243"/>
        <end position="288"/>
    </location>
</feature>
<feature type="region of interest" description="Actin-binding 2" evidence="1">
    <location>
        <begin position="303"/>
        <end position="384"/>
    </location>
</feature>
<feature type="region of interest" description="Interaction with actin" evidence="1">
    <location>
        <begin position="355"/>
        <end position="384"/>
    </location>
</feature>
<feature type="compositionally biased region" description="Basic and acidic residues" evidence="3">
    <location>
        <begin position="1"/>
        <end position="11"/>
    </location>
</feature>
<feature type="compositionally biased region" description="Polar residues" evidence="3">
    <location>
        <begin position="35"/>
        <end position="47"/>
    </location>
</feature>
<feature type="compositionally biased region" description="Acidic residues" evidence="3">
    <location>
        <begin position="134"/>
        <end position="145"/>
    </location>
</feature>
<feature type="modified residue" description="Phosphoserine" evidence="2">
    <location>
        <position position="156"/>
    </location>
</feature>
<feature type="modified residue" description="Phosphoserine" evidence="2">
    <location>
        <position position="191"/>
    </location>
</feature>
<organism>
    <name type="scientific">Sus scrofa</name>
    <name type="common">Pig</name>
    <dbReference type="NCBI Taxonomy" id="9823"/>
    <lineage>
        <taxon>Eukaryota</taxon>
        <taxon>Metazoa</taxon>
        <taxon>Chordata</taxon>
        <taxon>Craniata</taxon>
        <taxon>Vertebrata</taxon>
        <taxon>Euteleostomi</taxon>
        <taxon>Mammalia</taxon>
        <taxon>Eutheria</taxon>
        <taxon>Laurasiatheria</taxon>
        <taxon>Artiodactyla</taxon>
        <taxon>Suina</taxon>
        <taxon>Suidae</taxon>
        <taxon>Sus</taxon>
    </lineage>
</organism>